<evidence type="ECO:0000255" key="1">
    <source>
        <dbReference type="HAMAP-Rule" id="MF_00377"/>
    </source>
</evidence>
<feature type="chain" id="PRO_1000060006" description="Chromosomal replication initiator protein DnaA">
    <location>
        <begin position="1"/>
        <end position="448"/>
    </location>
</feature>
<feature type="region of interest" description="Domain I, interacts with DnaA modulators" evidence="1">
    <location>
        <begin position="1"/>
        <end position="85"/>
    </location>
</feature>
<feature type="region of interest" description="Domain II" evidence="1">
    <location>
        <begin position="85"/>
        <end position="110"/>
    </location>
</feature>
<feature type="region of interest" description="Domain III, AAA+ region" evidence="1">
    <location>
        <begin position="111"/>
        <end position="327"/>
    </location>
</feature>
<feature type="region of interest" description="Domain IV, binds dsDNA" evidence="1">
    <location>
        <begin position="328"/>
        <end position="448"/>
    </location>
</feature>
<feature type="binding site" evidence="1">
    <location>
        <position position="155"/>
    </location>
    <ligand>
        <name>ATP</name>
        <dbReference type="ChEBI" id="CHEBI:30616"/>
    </ligand>
</feature>
<feature type="binding site" evidence="1">
    <location>
        <position position="157"/>
    </location>
    <ligand>
        <name>ATP</name>
        <dbReference type="ChEBI" id="CHEBI:30616"/>
    </ligand>
</feature>
<feature type="binding site" evidence="1">
    <location>
        <position position="158"/>
    </location>
    <ligand>
        <name>ATP</name>
        <dbReference type="ChEBI" id="CHEBI:30616"/>
    </ligand>
</feature>
<feature type="binding site" evidence="1">
    <location>
        <position position="159"/>
    </location>
    <ligand>
        <name>ATP</name>
        <dbReference type="ChEBI" id="CHEBI:30616"/>
    </ligand>
</feature>
<name>DNAA_ALKMQ</name>
<gene>
    <name evidence="1" type="primary">dnaA</name>
    <name type="ordered locus">Amet_0001</name>
</gene>
<sequence length="448" mass="50733">MHDNLPQIWEKAINLIKTELTEVSFNTWVKPIQAISLDNETLVLGVPNDFTQGILNARYNTLISNAVKQVTSKNYEVHIVVPSEERVGDTQNINARRSNAQSPIMGNSPLILNPKYTFDTFVIGNSNRFAHAASVAVAESPAKAYNPLFIYGGVGLGKTHLMNAIGHYILANNPKAKVVYVSSETFTNELINSIRDDRNVEFRNRYRNVDVLLVDDIQFIAGKERTQEEFFHTFNALHESNKQIIISSDRPPKEIPTLEERLRSRFEWGLITDIQPPDLETRIAILRKKAQMENIYVPDEVTAHIAKKIQSNIRELEGALIRIVAYSSLTNSEVTVELASEALKEIFTSKPRLLNVPLIKEVVSNHFSIKLEDFDSKKRTRSISYPRQVAMYLTRELTDLSLPKIGDEFGGRDHTTVMHAHSKIVNEINSDSDLKNKLDAIIKELKSD</sequence>
<keyword id="KW-0067">ATP-binding</keyword>
<keyword id="KW-0963">Cytoplasm</keyword>
<keyword id="KW-0235">DNA replication</keyword>
<keyword id="KW-0238">DNA-binding</keyword>
<keyword id="KW-0446">Lipid-binding</keyword>
<keyword id="KW-0547">Nucleotide-binding</keyword>
<keyword id="KW-1185">Reference proteome</keyword>
<reference key="1">
    <citation type="journal article" date="2016" name="Genome Announc.">
        <title>Complete genome sequence of Alkaliphilus metalliredigens strain QYMF, an alkaliphilic and metal-reducing bacterium isolated from borax-contaminated leachate ponds.</title>
        <authorList>
            <person name="Hwang C."/>
            <person name="Copeland A."/>
            <person name="Lucas S."/>
            <person name="Lapidus A."/>
            <person name="Barry K."/>
            <person name="Detter J.C."/>
            <person name="Glavina Del Rio T."/>
            <person name="Hammon N."/>
            <person name="Israni S."/>
            <person name="Dalin E."/>
            <person name="Tice H."/>
            <person name="Pitluck S."/>
            <person name="Chertkov O."/>
            <person name="Brettin T."/>
            <person name="Bruce D."/>
            <person name="Han C."/>
            <person name="Schmutz J."/>
            <person name="Larimer F."/>
            <person name="Land M.L."/>
            <person name="Hauser L."/>
            <person name="Kyrpides N."/>
            <person name="Mikhailova N."/>
            <person name="Ye Q."/>
            <person name="Zhou J."/>
            <person name="Richardson P."/>
            <person name="Fields M.W."/>
        </authorList>
    </citation>
    <scope>NUCLEOTIDE SEQUENCE [LARGE SCALE GENOMIC DNA]</scope>
    <source>
        <strain>QYMF</strain>
    </source>
</reference>
<dbReference type="EMBL" id="CP000724">
    <property type="protein sequence ID" value="ABR46244.1"/>
    <property type="molecule type" value="Genomic_DNA"/>
</dbReference>
<dbReference type="RefSeq" id="WP_011971153.1">
    <property type="nucleotide sequence ID" value="NC_009633.1"/>
</dbReference>
<dbReference type="SMR" id="A6TJ76"/>
<dbReference type="STRING" id="293826.Amet_0001"/>
<dbReference type="KEGG" id="amt:Amet_0001"/>
<dbReference type="eggNOG" id="COG0593">
    <property type="taxonomic scope" value="Bacteria"/>
</dbReference>
<dbReference type="HOGENOM" id="CLU_026910_3_1_9"/>
<dbReference type="OrthoDB" id="9807019at2"/>
<dbReference type="Proteomes" id="UP000001572">
    <property type="component" value="Chromosome"/>
</dbReference>
<dbReference type="GO" id="GO:0005737">
    <property type="term" value="C:cytoplasm"/>
    <property type="evidence" value="ECO:0007669"/>
    <property type="project" value="UniProtKB-SubCell"/>
</dbReference>
<dbReference type="GO" id="GO:0005886">
    <property type="term" value="C:plasma membrane"/>
    <property type="evidence" value="ECO:0007669"/>
    <property type="project" value="TreeGrafter"/>
</dbReference>
<dbReference type="GO" id="GO:0005524">
    <property type="term" value="F:ATP binding"/>
    <property type="evidence" value="ECO:0007669"/>
    <property type="project" value="UniProtKB-UniRule"/>
</dbReference>
<dbReference type="GO" id="GO:0016887">
    <property type="term" value="F:ATP hydrolysis activity"/>
    <property type="evidence" value="ECO:0007669"/>
    <property type="project" value="InterPro"/>
</dbReference>
<dbReference type="GO" id="GO:0003688">
    <property type="term" value="F:DNA replication origin binding"/>
    <property type="evidence" value="ECO:0007669"/>
    <property type="project" value="UniProtKB-UniRule"/>
</dbReference>
<dbReference type="GO" id="GO:0008289">
    <property type="term" value="F:lipid binding"/>
    <property type="evidence" value="ECO:0007669"/>
    <property type="project" value="UniProtKB-KW"/>
</dbReference>
<dbReference type="GO" id="GO:0006270">
    <property type="term" value="P:DNA replication initiation"/>
    <property type="evidence" value="ECO:0007669"/>
    <property type="project" value="UniProtKB-UniRule"/>
</dbReference>
<dbReference type="GO" id="GO:0006275">
    <property type="term" value="P:regulation of DNA replication"/>
    <property type="evidence" value="ECO:0007669"/>
    <property type="project" value="UniProtKB-UniRule"/>
</dbReference>
<dbReference type="CDD" id="cd00009">
    <property type="entry name" value="AAA"/>
    <property type="match status" value="1"/>
</dbReference>
<dbReference type="CDD" id="cd06571">
    <property type="entry name" value="Bac_DnaA_C"/>
    <property type="match status" value="1"/>
</dbReference>
<dbReference type="FunFam" id="1.10.8.60:FF:000003">
    <property type="entry name" value="Chromosomal replication initiator protein DnaA"/>
    <property type="match status" value="1"/>
</dbReference>
<dbReference type="FunFam" id="3.40.50.300:FF:000150">
    <property type="entry name" value="Chromosomal replication initiator protein DnaA"/>
    <property type="match status" value="1"/>
</dbReference>
<dbReference type="Gene3D" id="1.10.1750.10">
    <property type="match status" value="1"/>
</dbReference>
<dbReference type="Gene3D" id="1.10.8.60">
    <property type="match status" value="1"/>
</dbReference>
<dbReference type="Gene3D" id="3.30.300.180">
    <property type="match status" value="1"/>
</dbReference>
<dbReference type="Gene3D" id="3.40.50.300">
    <property type="entry name" value="P-loop containing nucleotide triphosphate hydrolases"/>
    <property type="match status" value="1"/>
</dbReference>
<dbReference type="HAMAP" id="MF_00377">
    <property type="entry name" value="DnaA_bact"/>
    <property type="match status" value="1"/>
</dbReference>
<dbReference type="InterPro" id="IPR003593">
    <property type="entry name" value="AAA+_ATPase"/>
</dbReference>
<dbReference type="InterPro" id="IPR001957">
    <property type="entry name" value="Chromosome_initiator_DnaA"/>
</dbReference>
<dbReference type="InterPro" id="IPR020591">
    <property type="entry name" value="Chromosome_initiator_DnaA-like"/>
</dbReference>
<dbReference type="InterPro" id="IPR018312">
    <property type="entry name" value="Chromosome_initiator_DnaA_CS"/>
</dbReference>
<dbReference type="InterPro" id="IPR013159">
    <property type="entry name" value="DnaA_C"/>
</dbReference>
<dbReference type="InterPro" id="IPR013317">
    <property type="entry name" value="DnaA_dom"/>
</dbReference>
<dbReference type="InterPro" id="IPR024633">
    <property type="entry name" value="DnaA_N_dom"/>
</dbReference>
<dbReference type="InterPro" id="IPR038454">
    <property type="entry name" value="DnaA_N_sf"/>
</dbReference>
<dbReference type="InterPro" id="IPR027417">
    <property type="entry name" value="P-loop_NTPase"/>
</dbReference>
<dbReference type="InterPro" id="IPR010921">
    <property type="entry name" value="Trp_repressor/repl_initiator"/>
</dbReference>
<dbReference type="NCBIfam" id="TIGR00362">
    <property type="entry name" value="DnaA"/>
    <property type="match status" value="1"/>
</dbReference>
<dbReference type="NCBIfam" id="NF010686">
    <property type="entry name" value="PRK14086.1"/>
    <property type="match status" value="1"/>
</dbReference>
<dbReference type="PANTHER" id="PTHR30050">
    <property type="entry name" value="CHROMOSOMAL REPLICATION INITIATOR PROTEIN DNAA"/>
    <property type="match status" value="1"/>
</dbReference>
<dbReference type="PANTHER" id="PTHR30050:SF2">
    <property type="entry name" value="CHROMOSOMAL REPLICATION INITIATOR PROTEIN DNAA"/>
    <property type="match status" value="1"/>
</dbReference>
<dbReference type="Pfam" id="PF00308">
    <property type="entry name" value="Bac_DnaA"/>
    <property type="match status" value="1"/>
</dbReference>
<dbReference type="Pfam" id="PF08299">
    <property type="entry name" value="Bac_DnaA_C"/>
    <property type="match status" value="1"/>
</dbReference>
<dbReference type="Pfam" id="PF11638">
    <property type="entry name" value="DnaA_N"/>
    <property type="match status" value="1"/>
</dbReference>
<dbReference type="PRINTS" id="PR00051">
    <property type="entry name" value="DNAA"/>
</dbReference>
<dbReference type="SMART" id="SM00382">
    <property type="entry name" value="AAA"/>
    <property type="match status" value="1"/>
</dbReference>
<dbReference type="SMART" id="SM00760">
    <property type="entry name" value="Bac_DnaA_C"/>
    <property type="match status" value="1"/>
</dbReference>
<dbReference type="SUPFAM" id="SSF52540">
    <property type="entry name" value="P-loop containing nucleoside triphosphate hydrolases"/>
    <property type="match status" value="1"/>
</dbReference>
<dbReference type="SUPFAM" id="SSF48295">
    <property type="entry name" value="TrpR-like"/>
    <property type="match status" value="1"/>
</dbReference>
<dbReference type="PROSITE" id="PS01008">
    <property type="entry name" value="DNAA"/>
    <property type="match status" value="1"/>
</dbReference>
<organism>
    <name type="scientific">Alkaliphilus metalliredigens (strain QYMF)</name>
    <dbReference type="NCBI Taxonomy" id="293826"/>
    <lineage>
        <taxon>Bacteria</taxon>
        <taxon>Bacillati</taxon>
        <taxon>Bacillota</taxon>
        <taxon>Clostridia</taxon>
        <taxon>Peptostreptococcales</taxon>
        <taxon>Natronincolaceae</taxon>
        <taxon>Alkaliphilus</taxon>
    </lineage>
</organism>
<proteinExistence type="inferred from homology"/>
<comment type="function">
    <text evidence="1">Plays an essential role in the initiation and regulation of chromosomal replication. ATP-DnaA binds to the origin of replication (oriC) to initiate formation of the DNA replication initiation complex once per cell cycle. Binds the DnaA box (a 9 base pair repeat at the origin) and separates the double-stranded (ds)DNA. Forms a right-handed helical filament on oriC DNA; dsDNA binds to the exterior of the filament while single-stranded (ss)DNA is stabiized in the filament's interior. The ATP-DnaA-oriC complex binds and stabilizes one strand of the AT-rich DNA unwinding element (DUE), permitting loading of DNA polymerase. After initiation quickly degrades to an ADP-DnaA complex that is not apt for DNA replication. Binds acidic phospholipids.</text>
</comment>
<comment type="subunit">
    <text evidence="1">Oligomerizes as a right-handed, spiral filament on DNA at oriC.</text>
</comment>
<comment type="subcellular location">
    <subcellularLocation>
        <location evidence="1">Cytoplasm</location>
    </subcellularLocation>
</comment>
<comment type="domain">
    <text evidence="1">Domain I is involved in oligomerization and binding regulators, domain II is flexibile and of varying length in different bacteria, domain III forms the AAA+ region, while domain IV binds dsDNA.</text>
</comment>
<comment type="similarity">
    <text evidence="1">Belongs to the DnaA family.</text>
</comment>
<protein>
    <recommendedName>
        <fullName evidence="1">Chromosomal replication initiator protein DnaA</fullName>
    </recommendedName>
</protein>
<accession>A6TJ76</accession>